<keyword id="KW-1185">Reference proteome</keyword>
<evidence type="ECO:0000255" key="1">
    <source>
        <dbReference type="HAMAP-Rule" id="MF_00302"/>
    </source>
</evidence>
<reference key="1">
    <citation type="journal article" date="2003" name="Nature">
        <title>Unique physiological and pathogenic features of Leptospira interrogans revealed by whole-genome sequencing.</title>
        <authorList>
            <person name="Ren S.-X."/>
            <person name="Fu G."/>
            <person name="Jiang X.-G."/>
            <person name="Zeng R."/>
            <person name="Miao Y.-G."/>
            <person name="Xu H."/>
            <person name="Zhang Y.-X."/>
            <person name="Xiong H."/>
            <person name="Lu G."/>
            <person name="Lu L.-F."/>
            <person name="Jiang H.-Q."/>
            <person name="Jia J."/>
            <person name="Tu Y.-F."/>
            <person name="Jiang J.-X."/>
            <person name="Gu W.-Y."/>
            <person name="Zhang Y.-Q."/>
            <person name="Cai Z."/>
            <person name="Sheng H.-H."/>
            <person name="Yin H.-F."/>
            <person name="Zhang Y."/>
            <person name="Zhu G.-F."/>
            <person name="Wan M."/>
            <person name="Huang H.-L."/>
            <person name="Qian Z."/>
            <person name="Wang S.-Y."/>
            <person name="Ma W."/>
            <person name="Yao Z.-J."/>
            <person name="Shen Y."/>
            <person name="Qiang B.-Q."/>
            <person name="Xia Q.-C."/>
            <person name="Guo X.-K."/>
            <person name="Danchin A."/>
            <person name="Saint Girons I."/>
            <person name="Somerville R.L."/>
            <person name="Wen Y.-M."/>
            <person name="Shi M.-H."/>
            <person name="Chen Z."/>
            <person name="Xu J.-G."/>
            <person name="Zhao G.-P."/>
        </authorList>
    </citation>
    <scope>NUCLEOTIDE SEQUENCE [LARGE SCALE GENOMIC DNA]</scope>
    <source>
        <strain>56601</strain>
    </source>
</reference>
<name>CLPS_LEPIN</name>
<dbReference type="EMBL" id="AE010300">
    <property type="protein sequence ID" value="AAN49302.1"/>
    <property type="molecule type" value="Genomic_DNA"/>
</dbReference>
<dbReference type="RefSeq" id="NP_712284.1">
    <property type="nucleotide sequence ID" value="NC_004342.2"/>
</dbReference>
<dbReference type="RefSeq" id="WP_001279894.1">
    <property type="nucleotide sequence ID" value="NC_004342.2"/>
</dbReference>
<dbReference type="SMR" id="Q8F4D8"/>
<dbReference type="FunCoup" id="Q8F4D8">
    <property type="interactions" value="166"/>
</dbReference>
<dbReference type="STRING" id="189518.LA_2103"/>
<dbReference type="PaxDb" id="189518-LA_2103"/>
<dbReference type="EnsemblBacteria" id="AAN49302">
    <property type="protein sequence ID" value="AAN49302"/>
    <property type="gene ID" value="LA_2103"/>
</dbReference>
<dbReference type="GeneID" id="61141711"/>
<dbReference type="KEGG" id="lil:LA_2103"/>
<dbReference type="PATRIC" id="fig|189518.3.peg.2097"/>
<dbReference type="HOGENOM" id="CLU_134358_1_0_12"/>
<dbReference type="InParanoid" id="Q8F4D8"/>
<dbReference type="OrthoDB" id="9796121at2"/>
<dbReference type="Proteomes" id="UP000001408">
    <property type="component" value="Chromosome I"/>
</dbReference>
<dbReference type="GO" id="GO:0030163">
    <property type="term" value="P:protein catabolic process"/>
    <property type="evidence" value="ECO:0007669"/>
    <property type="project" value="InterPro"/>
</dbReference>
<dbReference type="GO" id="GO:0006508">
    <property type="term" value="P:proteolysis"/>
    <property type="evidence" value="ECO:0007669"/>
    <property type="project" value="UniProtKB-UniRule"/>
</dbReference>
<dbReference type="FunFam" id="3.30.1390.10:FF:000002">
    <property type="entry name" value="ATP-dependent Clp protease adapter protein ClpS"/>
    <property type="match status" value="1"/>
</dbReference>
<dbReference type="Gene3D" id="3.30.1390.10">
    <property type="match status" value="1"/>
</dbReference>
<dbReference type="HAMAP" id="MF_00302">
    <property type="entry name" value="ClpS"/>
    <property type="match status" value="1"/>
</dbReference>
<dbReference type="InterPro" id="IPR022935">
    <property type="entry name" value="ClpS"/>
</dbReference>
<dbReference type="InterPro" id="IPR003769">
    <property type="entry name" value="ClpS_core"/>
</dbReference>
<dbReference type="InterPro" id="IPR014719">
    <property type="entry name" value="Ribosomal_bL12_C/ClpS-like"/>
</dbReference>
<dbReference type="NCBIfam" id="NF000672">
    <property type="entry name" value="PRK00033.1-5"/>
    <property type="match status" value="1"/>
</dbReference>
<dbReference type="PANTHER" id="PTHR33473:SF19">
    <property type="entry name" value="ATP-DEPENDENT CLP PROTEASE ADAPTER PROTEIN CLPS"/>
    <property type="match status" value="1"/>
</dbReference>
<dbReference type="PANTHER" id="PTHR33473">
    <property type="entry name" value="ATP-DEPENDENT CLP PROTEASE ADAPTER PROTEIN CLPS1, CHLOROPLASTIC"/>
    <property type="match status" value="1"/>
</dbReference>
<dbReference type="Pfam" id="PF02617">
    <property type="entry name" value="ClpS"/>
    <property type="match status" value="1"/>
</dbReference>
<dbReference type="SUPFAM" id="SSF54736">
    <property type="entry name" value="ClpS-like"/>
    <property type="match status" value="1"/>
</dbReference>
<proteinExistence type="inferred from homology"/>
<sequence length="111" mass="12942">MSDIFRFDTEEQTLTKEKIKLKKPSKYRVIILNDDFTPMEFVVWILQMVFHRSRAESQQIMLKAHITGKALCGVYSHDVARTKVAQVQQLAEQHGYPLHCTMEVEEGEEES</sequence>
<accession>Q8F4D8</accession>
<comment type="function">
    <text evidence="1">Involved in the modulation of the specificity of the ClpAP-mediated ATP-dependent protein degradation.</text>
</comment>
<comment type="subunit">
    <text evidence="1">Binds to the N-terminal domain of the chaperone ClpA.</text>
</comment>
<comment type="similarity">
    <text evidence="1">Belongs to the ClpS family.</text>
</comment>
<feature type="chain" id="PRO_0000215721" description="ATP-dependent Clp protease adapter protein ClpS">
    <location>
        <begin position="1"/>
        <end position="111"/>
    </location>
</feature>
<gene>
    <name evidence="1" type="primary">clpS</name>
    <name type="ordered locus">LA_2103</name>
</gene>
<organism>
    <name type="scientific">Leptospira interrogans serogroup Icterohaemorrhagiae serovar Lai (strain 56601)</name>
    <dbReference type="NCBI Taxonomy" id="189518"/>
    <lineage>
        <taxon>Bacteria</taxon>
        <taxon>Pseudomonadati</taxon>
        <taxon>Spirochaetota</taxon>
        <taxon>Spirochaetia</taxon>
        <taxon>Leptospirales</taxon>
        <taxon>Leptospiraceae</taxon>
        <taxon>Leptospira</taxon>
    </lineage>
</organism>
<protein>
    <recommendedName>
        <fullName evidence="1">ATP-dependent Clp protease adapter protein ClpS</fullName>
    </recommendedName>
</protein>